<keyword id="KW-0025">Alternative splicing</keyword>
<keyword id="KW-0106">Calcium</keyword>
<keyword id="KW-0968">Cytoplasmic vesicle</keyword>
<keyword id="KW-0256">Endoplasmic reticulum</keyword>
<keyword id="KW-0967">Endosome</keyword>
<keyword id="KW-0472">Membrane</keyword>
<keyword id="KW-0479">Metal-binding</keyword>
<keyword id="KW-1267">Proteomics identification</keyword>
<keyword id="KW-1185">Reference proteome</keyword>
<keyword id="KW-0677">Repeat</keyword>
<keyword id="KW-0770">Synapse</keyword>
<keyword id="KW-0812">Transmembrane</keyword>
<keyword id="KW-1133">Transmembrane helix</keyword>
<proteinExistence type="evidence at protein level"/>
<dbReference type="EMBL" id="AY656715">
    <property type="protein sequence ID" value="AAT73058.1"/>
    <property type="molecule type" value="mRNA"/>
</dbReference>
<dbReference type="EMBL" id="AY656716">
    <property type="protein sequence ID" value="AAT73059.1"/>
    <property type="molecule type" value="mRNA"/>
</dbReference>
<dbReference type="EMBL" id="AK025997">
    <property type="protein sequence ID" value="BAB15311.1"/>
    <property type="molecule type" value="mRNA"/>
</dbReference>
<dbReference type="EMBL" id="AK057694">
    <property type="protein sequence ID" value="BAB71547.1"/>
    <property type="molecule type" value="mRNA"/>
</dbReference>
<dbReference type="EMBL" id="AK091330">
    <property type="protein sequence ID" value="BAC03637.1"/>
    <property type="molecule type" value="mRNA"/>
</dbReference>
<dbReference type="EMBL" id="AC008534">
    <property type="status" value="NOT_ANNOTATED_CDS"/>
    <property type="molecule type" value="Genomic_DNA"/>
</dbReference>
<dbReference type="EMBL" id="AC008573">
    <property type="status" value="NOT_ANNOTATED_CDS"/>
    <property type="molecule type" value="Genomic_DNA"/>
</dbReference>
<dbReference type="EMBL" id="AC010362">
    <property type="status" value="NOT_ANNOTATED_CDS"/>
    <property type="molecule type" value="Genomic_DNA"/>
</dbReference>
<dbReference type="EMBL" id="AC012312">
    <property type="status" value="NOT_ANNOTATED_CDS"/>
    <property type="molecule type" value="Genomic_DNA"/>
</dbReference>
<dbReference type="EMBL" id="AC099507">
    <property type="status" value="NOT_ANNOTATED_CDS"/>
    <property type="molecule type" value="Genomic_DNA"/>
</dbReference>
<dbReference type="EMBL" id="BC030005">
    <property type="protein sequence ID" value="AAH30005.1"/>
    <property type="molecule type" value="mRNA"/>
</dbReference>
<dbReference type="CCDS" id="CCDS34203.1">
    <molecule id="Q6DN14-1"/>
</dbReference>
<dbReference type="CCDS" id="CCDS47247.1">
    <molecule id="Q6DN14-2"/>
</dbReference>
<dbReference type="CCDS" id="CCDS75275.1">
    <molecule id="Q6DN14-3"/>
</dbReference>
<dbReference type="CCDS" id="CCDS93747.1">
    <molecule id="Q6DN14-4"/>
</dbReference>
<dbReference type="RefSeq" id="NP_001002796.1">
    <molecule id="Q6DN14-2"/>
    <property type="nucleotide sequence ID" value="NM_001002796.5"/>
</dbReference>
<dbReference type="RefSeq" id="NP_001284706.1">
    <molecule id="Q6DN14-3"/>
    <property type="nucleotide sequence ID" value="NM_001297777.3"/>
</dbReference>
<dbReference type="RefSeq" id="NP_001380478.1">
    <molecule id="Q6DN14-4"/>
    <property type="nucleotide sequence ID" value="NM_001393549.1"/>
</dbReference>
<dbReference type="RefSeq" id="NP_078993.4">
    <molecule id="Q6DN14-1"/>
    <property type="nucleotide sequence ID" value="NM_024717.5"/>
</dbReference>
<dbReference type="SMR" id="Q6DN14"/>
<dbReference type="BioGRID" id="122875">
    <property type="interactions" value="9"/>
</dbReference>
<dbReference type="FunCoup" id="Q6DN14">
    <property type="interactions" value="802"/>
</dbReference>
<dbReference type="IntAct" id="Q6DN14">
    <property type="interactions" value="2"/>
</dbReference>
<dbReference type="STRING" id="9606.ENSP00000424126"/>
<dbReference type="GlyGen" id="Q6DN14">
    <property type="glycosylation" value="2 sites"/>
</dbReference>
<dbReference type="iPTMnet" id="Q6DN14"/>
<dbReference type="PhosphoSitePlus" id="Q6DN14"/>
<dbReference type="BioMuta" id="MCTP1"/>
<dbReference type="DMDM" id="300669650"/>
<dbReference type="jPOST" id="Q6DN14"/>
<dbReference type="MassIVE" id="Q6DN14"/>
<dbReference type="PaxDb" id="9606-ENSP00000424126"/>
<dbReference type="PeptideAtlas" id="Q6DN14"/>
<dbReference type="ProteomicsDB" id="66243">
    <molecule id="Q6DN14-1"/>
</dbReference>
<dbReference type="ProteomicsDB" id="66244">
    <molecule id="Q6DN14-2"/>
</dbReference>
<dbReference type="ProteomicsDB" id="66245">
    <molecule id="Q6DN14-3"/>
</dbReference>
<dbReference type="ProteomicsDB" id="66246">
    <molecule id="Q6DN14-4"/>
</dbReference>
<dbReference type="ProteomicsDB" id="66247">
    <molecule id="Q6DN14-5"/>
</dbReference>
<dbReference type="Antibodypedia" id="2751">
    <property type="antibodies" value="60 antibodies from 12 providers"/>
</dbReference>
<dbReference type="DNASU" id="79772"/>
<dbReference type="Ensembl" id="ENST00000312216.12">
    <molecule id="Q6DN14-2"/>
    <property type="protein sequence ID" value="ENSP00000308957.8"/>
    <property type="gene ID" value="ENSG00000175471.20"/>
</dbReference>
<dbReference type="Ensembl" id="ENST00000429576.6">
    <molecule id="Q6DN14-3"/>
    <property type="protein sequence ID" value="ENSP00000391639.2"/>
    <property type="gene ID" value="ENSG00000175471.20"/>
</dbReference>
<dbReference type="Ensembl" id="ENST00000505078.5">
    <molecule id="Q6DN14-5"/>
    <property type="protein sequence ID" value="ENSP00000426417.1"/>
    <property type="gene ID" value="ENSG00000175471.20"/>
</dbReference>
<dbReference type="Ensembl" id="ENST00000505208.5">
    <molecule id="Q6DN14-4"/>
    <property type="protein sequence ID" value="ENSP00000426438.1"/>
    <property type="gene ID" value="ENSG00000175471.20"/>
</dbReference>
<dbReference type="Ensembl" id="ENST00000515393.6">
    <molecule id="Q6DN14-1"/>
    <property type="protein sequence ID" value="ENSP00000424126.1"/>
    <property type="gene ID" value="ENSG00000175471.20"/>
</dbReference>
<dbReference type="GeneID" id="79772"/>
<dbReference type="KEGG" id="hsa:79772"/>
<dbReference type="MANE-Select" id="ENST00000515393.6">
    <property type="protein sequence ID" value="ENSP00000424126.1"/>
    <property type="RefSeq nucleotide sequence ID" value="NM_024717.7"/>
    <property type="RefSeq protein sequence ID" value="NP_078993.4"/>
</dbReference>
<dbReference type="UCSC" id="uc003kku.4">
    <molecule id="Q6DN14-1"/>
    <property type="organism name" value="human"/>
</dbReference>
<dbReference type="AGR" id="HGNC:26183"/>
<dbReference type="CTD" id="79772"/>
<dbReference type="DisGeNET" id="79772"/>
<dbReference type="GeneCards" id="MCTP1"/>
<dbReference type="HGNC" id="HGNC:26183">
    <property type="gene designation" value="MCTP1"/>
</dbReference>
<dbReference type="HPA" id="ENSG00000175471">
    <property type="expression patterns" value="Tissue enhanced (bone)"/>
</dbReference>
<dbReference type="MIM" id="616296">
    <property type="type" value="gene"/>
</dbReference>
<dbReference type="neXtProt" id="NX_Q6DN14"/>
<dbReference type="OpenTargets" id="ENSG00000175471"/>
<dbReference type="PharmGKB" id="PA142671472"/>
<dbReference type="VEuPathDB" id="HostDB:ENSG00000175471"/>
<dbReference type="eggNOG" id="KOG1030">
    <property type="taxonomic scope" value="Eukaryota"/>
</dbReference>
<dbReference type="GeneTree" id="ENSGT00940000156031"/>
<dbReference type="HOGENOM" id="CLU_011170_1_1_1"/>
<dbReference type="InParanoid" id="Q6DN14"/>
<dbReference type="OMA" id="DCGPTLE"/>
<dbReference type="OrthoDB" id="5973539at2759"/>
<dbReference type="PAN-GO" id="Q6DN14">
    <property type="GO annotations" value="4 GO annotations based on evolutionary models"/>
</dbReference>
<dbReference type="PhylomeDB" id="Q6DN14"/>
<dbReference type="TreeFam" id="TF323373"/>
<dbReference type="PathwayCommons" id="Q6DN14"/>
<dbReference type="SignaLink" id="Q6DN14"/>
<dbReference type="BioGRID-ORCS" id="79772">
    <property type="hits" value="39 hits in 1158 CRISPR screens"/>
</dbReference>
<dbReference type="ChiTaRS" id="MCTP1">
    <property type="organism name" value="human"/>
</dbReference>
<dbReference type="GenomeRNAi" id="79772"/>
<dbReference type="Pharos" id="Q6DN14">
    <property type="development level" value="Tbio"/>
</dbReference>
<dbReference type="PRO" id="PR:Q6DN14"/>
<dbReference type="Proteomes" id="UP000005640">
    <property type="component" value="Chromosome 5"/>
</dbReference>
<dbReference type="RNAct" id="Q6DN14">
    <property type="molecule type" value="protein"/>
</dbReference>
<dbReference type="Bgee" id="ENSG00000175471">
    <property type="expression patterns" value="Expressed in secondary oocyte and 166 other cell types or tissues"/>
</dbReference>
<dbReference type="ExpressionAtlas" id="Q6DN14">
    <property type="expression patterns" value="baseline and differential"/>
</dbReference>
<dbReference type="GO" id="GO:0005789">
    <property type="term" value="C:endoplasmic reticulum membrane"/>
    <property type="evidence" value="ECO:0000250"/>
    <property type="project" value="UniProtKB"/>
</dbReference>
<dbReference type="GO" id="GO:0016020">
    <property type="term" value="C:membrane"/>
    <property type="evidence" value="ECO:0000314"/>
    <property type="project" value="HGNC-UCL"/>
</dbReference>
<dbReference type="GO" id="GO:0055037">
    <property type="term" value="C:recycling endosome"/>
    <property type="evidence" value="ECO:0000250"/>
    <property type="project" value="UniProtKB"/>
</dbReference>
<dbReference type="GO" id="GO:0030672">
    <property type="term" value="C:synaptic vesicle membrane"/>
    <property type="evidence" value="ECO:0000250"/>
    <property type="project" value="UniProtKB"/>
</dbReference>
<dbReference type="GO" id="GO:0005509">
    <property type="term" value="F:calcium ion binding"/>
    <property type="evidence" value="ECO:0000314"/>
    <property type="project" value="HGNC-UCL"/>
</dbReference>
<dbReference type="GO" id="GO:0019722">
    <property type="term" value="P:calcium-mediated signaling"/>
    <property type="evidence" value="ECO:0000303"/>
    <property type="project" value="HGNC-UCL"/>
</dbReference>
<dbReference type="GO" id="GO:0030336">
    <property type="term" value="P:negative regulation of cell migration"/>
    <property type="evidence" value="ECO:0000250"/>
    <property type="project" value="UniProtKB"/>
</dbReference>
<dbReference type="GO" id="GO:0045806">
    <property type="term" value="P:negative regulation of endocytosis"/>
    <property type="evidence" value="ECO:0000250"/>
    <property type="project" value="UniProtKB"/>
</dbReference>
<dbReference type="GO" id="GO:1902883">
    <property type="term" value="P:negative regulation of response to oxidative stress"/>
    <property type="evidence" value="ECO:0000250"/>
    <property type="project" value="UniProtKB"/>
</dbReference>
<dbReference type="GO" id="GO:0048168">
    <property type="term" value="P:regulation of neuronal synaptic plasticity"/>
    <property type="evidence" value="ECO:0000250"/>
    <property type="project" value="UniProtKB"/>
</dbReference>
<dbReference type="GO" id="GO:0046928">
    <property type="term" value="P:regulation of neurotransmitter secretion"/>
    <property type="evidence" value="ECO:0000250"/>
    <property type="project" value="UniProtKB"/>
</dbReference>
<dbReference type="CDD" id="cd04042">
    <property type="entry name" value="C2A_MCTP_PRT"/>
    <property type="match status" value="1"/>
</dbReference>
<dbReference type="CDD" id="cd08376">
    <property type="entry name" value="C2B_MCTP_PRT"/>
    <property type="match status" value="1"/>
</dbReference>
<dbReference type="CDD" id="cd08377">
    <property type="entry name" value="C2C_MCTP_PRT"/>
    <property type="match status" value="1"/>
</dbReference>
<dbReference type="FunFam" id="2.60.40.150:FF:000050">
    <property type="entry name" value="Multiple C2 and transmembrane domain containing 1"/>
    <property type="match status" value="1"/>
</dbReference>
<dbReference type="FunFam" id="2.60.40.150:FF:000068">
    <property type="entry name" value="multiple C2 and transmembrane domain-containing protein 1 isoform X2"/>
    <property type="match status" value="1"/>
</dbReference>
<dbReference type="FunFam" id="2.60.40.150:FF:000019">
    <property type="entry name" value="Multiple C2 and transmembrane domain-containing protein 2 isoform 1"/>
    <property type="match status" value="1"/>
</dbReference>
<dbReference type="Gene3D" id="2.60.40.150">
    <property type="entry name" value="C2 domain"/>
    <property type="match status" value="3"/>
</dbReference>
<dbReference type="InterPro" id="IPR000008">
    <property type="entry name" value="C2_dom"/>
</dbReference>
<dbReference type="InterPro" id="IPR035892">
    <property type="entry name" value="C2_domain_sf"/>
</dbReference>
<dbReference type="InterPro" id="IPR013583">
    <property type="entry name" value="MCTP_C"/>
</dbReference>
<dbReference type="PANTHER" id="PTHR45911">
    <property type="entry name" value="C2 DOMAIN-CONTAINING PROTEIN"/>
    <property type="match status" value="1"/>
</dbReference>
<dbReference type="PANTHER" id="PTHR45911:SF3">
    <property type="entry name" value="DYSFERLIN-RELATED"/>
    <property type="match status" value="1"/>
</dbReference>
<dbReference type="Pfam" id="PF00168">
    <property type="entry name" value="C2"/>
    <property type="match status" value="3"/>
</dbReference>
<dbReference type="Pfam" id="PF08372">
    <property type="entry name" value="PRT_C"/>
    <property type="match status" value="1"/>
</dbReference>
<dbReference type="PRINTS" id="PR00360">
    <property type="entry name" value="C2DOMAIN"/>
</dbReference>
<dbReference type="SMART" id="SM00239">
    <property type="entry name" value="C2"/>
    <property type="match status" value="3"/>
</dbReference>
<dbReference type="SUPFAM" id="SSF49562">
    <property type="entry name" value="C2 domain (Calcium/lipid-binding domain, CaLB)"/>
    <property type="match status" value="3"/>
</dbReference>
<dbReference type="PROSITE" id="PS50004">
    <property type="entry name" value="C2"/>
    <property type="match status" value="3"/>
</dbReference>
<gene>
    <name type="primary">MCTP1</name>
</gene>
<sequence>MEPRAAAAGEPEPPAASSSFQARLWKNLQLGVGRSKGGGGGRAGGPERRTADTPSPSPPPPVGTGNAPARGSGAGSRWSGFKKRKQVLDRVFSSSQPNLCCSSPEPLEPGGAGRAEQGSTLRRRIREHLLPAVKGPAAASGAAGGTPPGGRSPDSAPSSSSASSSLSSSPQPPPRGDRARDEGARRQGPGAHLCHQKSSSLPGTACLEQLLEPPPPPAEPARSPAESRAPETGEEHGSSQKIINTAGTSNAEVPLADPGMYQLDITLRRGQSLAARDRGGTSDPYVKFKIGGKEVFRSKIIHKNLNPVWEEKACILVDHLREPLYIKVFDYDFGLQDDFMGSAFLDLTQLELNRPTDVTLTLKDPHYPDHDLGIILLSVILTPKEGESRDVTMLMRKSWKRSSKELSENEVVGSYFSVKSLFWRTCGRPALPVLGFCRAELQNPYCKNVQFQTQSLRLSDLHRKSHLWRGIVSITLIEGRDLKAMDSNGLSDPYVKFRLGHQKYKSKIMPKTLNPQWREQFDFHLYEERGGVIDITAWDKDAGKRDDFIGRCQVDLSALSREQTHKLELQLEEGEGHLVLLVTLTASATVSISDLSVNSLEDQKEREEILKRYSPLRIFHNLKDVGFLQVKVIRAEGLMAADVTGKSDPFCVVELNNDRLLTHTVYKNLNPEWNKVFTFNIKDIHSVLEVTVYDEDRDRSADFLGKVAIPLLSIQNGEQKAYVLKNKQLTGPTKGVIYLEIDVIFNAVKASLRTLIPKEQKYIEEENRLSKQLLLRNFIRMKRCVMVLVNAAYYVNSCFDWDSPPRSLAAFVLFLFVVWNFELYMIPLVLLLLLTWNYFLIISGKDNRQRDTVVEDMLEDEEEEDDKDDKDSEKKGFINKIYAIQEVCVSVQNILDEVASFGERIKNTFNWTVPFLSWLAIVALCVFTAILYCIPLRYIVLVWGINKFTKKLRSPYAIDNNELLDFLSRVPSDVQVVQYQELKPDPSHSPYKRKKNNLG</sequence>
<reference key="1">
    <citation type="journal article" date="2005" name="J. Biol. Chem.">
        <title>Evolutionarily conserved multiple C2 domain proteins with two transmembrane regions (MCTPs) and unusual Ca2+ binding properties.</title>
        <authorList>
            <person name="Shin O.H."/>
            <person name="Han W."/>
            <person name="Wang Y."/>
            <person name="Sudhof T.C."/>
        </authorList>
    </citation>
    <scope>NUCLEOTIDE SEQUENCE [MRNA] (ISOFORMS 1 AND 2)</scope>
    <scope>COFACTOR</scope>
</reference>
<reference key="2">
    <citation type="journal article" date="2004" name="Nat. Genet.">
        <title>Complete sequencing and characterization of 21,243 full-length human cDNAs.</title>
        <authorList>
            <person name="Ota T."/>
            <person name="Suzuki Y."/>
            <person name="Nishikawa T."/>
            <person name="Otsuki T."/>
            <person name="Sugiyama T."/>
            <person name="Irie R."/>
            <person name="Wakamatsu A."/>
            <person name="Hayashi K."/>
            <person name="Sato H."/>
            <person name="Nagai K."/>
            <person name="Kimura K."/>
            <person name="Makita H."/>
            <person name="Sekine M."/>
            <person name="Obayashi M."/>
            <person name="Nishi T."/>
            <person name="Shibahara T."/>
            <person name="Tanaka T."/>
            <person name="Ishii S."/>
            <person name="Yamamoto J."/>
            <person name="Saito K."/>
            <person name="Kawai Y."/>
            <person name="Isono Y."/>
            <person name="Nakamura Y."/>
            <person name="Nagahari K."/>
            <person name="Murakami K."/>
            <person name="Yasuda T."/>
            <person name="Iwayanagi T."/>
            <person name="Wagatsuma M."/>
            <person name="Shiratori A."/>
            <person name="Sudo H."/>
            <person name="Hosoiri T."/>
            <person name="Kaku Y."/>
            <person name="Kodaira H."/>
            <person name="Kondo H."/>
            <person name="Sugawara M."/>
            <person name="Takahashi M."/>
            <person name="Kanda K."/>
            <person name="Yokoi T."/>
            <person name="Furuya T."/>
            <person name="Kikkawa E."/>
            <person name="Omura Y."/>
            <person name="Abe K."/>
            <person name="Kamihara K."/>
            <person name="Katsuta N."/>
            <person name="Sato K."/>
            <person name="Tanikawa M."/>
            <person name="Yamazaki M."/>
            <person name="Ninomiya K."/>
            <person name="Ishibashi T."/>
            <person name="Yamashita H."/>
            <person name="Murakawa K."/>
            <person name="Fujimori K."/>
            <person name="Tanai H."/>
            <person name="Kimata M."/>
            <person name="Watanabe M."/>
            <person name="Hiraoka S."/>
            <person name="Chiba Y."/>
            <person name="Ishida S."/>
            <person name="Ono Y."/>
            <person name="Takiguchi S."/>
            <person name="Watanabe S."/>
            <person name="Yosida M."/>
            <person name="Hotuta T."/>
            <person name="Kusano J."/>
            <person name="Kanehori K."/>
            <person name="Takahashi-Fujii A."/>
            <person name="Hara H."/>
            <person name="Tanase T.-O."/>
            <person name="Nomura Y."/>
            <person name="Togiya S."/>
            <person name="Komai F."/>
            <person name="Hara R."/>
            <person name="Takeuchi K."/>
            <person name="Arita M."/>
            <person name="Imose N."/>
            <person name="Musashino K."/>
            <person name="Yuuki H."/>
            <person name="Oshima A."/>
            <person name="Sasaki N."/>
            <person name="Aotsuka S."/>
            <person name="Yoshikawa Y."/>
            <person name="Matsunawa H."/>
            <person name="Ichihara T."/>
            <person name="Shiohata N."/>
            <person name="Sano S."/>
            <person name="Moriya S."/>
            <person name="Momiyama H."/>
            <person name="Satoh N."/>
            <person name="Takami S."/>
            <person name="Terashima Y."/>
            <person name="Suzuki O."/>
            <person name="Nakagawa S."/>
            <person name="Senoh A."/>
            <person name="Mizoguchi H."/>
            <person name="Goto Y."/>
            <person name="Shimizu F."/>
            <person name="Wakebe H."/>
            <person name="Hishigaki H."/>
            <person name="Watanabe T."/>
            <person name="Sugiyama A."/>
            <person name="Takemoto M."/>
            <person name="Kawakami B."/>
            <person name="Yamazaki M."/>
            <person name="Watanabe K."/>
            <person name="Kumagai A."/>
            <person name="Itakura S."/>
            <person name="Fukuzumi Y."/>
            <person name="Fujimori Y."/>
            <person name="Komiyama M."/>
            <person name="Tashiro H."/>
            <person name="Tanigami A."/>
            <person name="Fujiwara T."/>
            <person name="Ono T."/>
            <person name="Yamada K."/>
            <person name="Fujii Y."/>
            <person name="Ozaki K."/>
            <person name="Hirao M."/>
            <person name="Ohmori Y."/>
            <person name="Kawabata A."/>
            <person name="Hikiji T."/>
            <person name="Kobatake N."/>
            <person name="Inagaki H."/>
            <person name="Ikema Y."/>
            <person name="Okamoto S."/>
            <person name="Okitani R."/>
            <person name="Kawakami T."/>
            <person name="Noguchi S."/>
            <person name="Itoh T."/>
            <person name="Shigeta K."/>
            <person name="Senba T."/>
            <person name="Matsumura K."/>
            <person name="Nakajima Y."/>
            <person name="Mizuno T."/>
            <person name="Morinaga M."/>
            <person name="Sasaki M."/>
            <person name="Togashi T."/>
            <person name="Oyama M."/>
            <person name="Hata H."/>
            <person name="Watanabe M."/>
            <person name="Komatsu T."/>
            <person name="Mizushima-Sugano J."/>
            <person name="Satoh T."/>
            <person name="Shirai Y."/>
            <person name="Takahashi Y."/>
            <person name="Nakagawa K."/>
            <person name="Okumura K."/>
            <person name="Nagase T."/>
            <person name="Nomura N."/>
            <person name="Kikuchi H."/>
            <person name="Masuho Y."/>
            <person name="Yamashita R."/>
            <person name="Nakai K."/>
            <person name="Yada T."/>
            <person name="Nakamura Y."/>
            <person name="Ohara O."/>
            <person name="Isogai T."/>
            <person name="Sugano S."/>
        </authorList>
    </citation>
    <scope>NUCLEOTIDE SEQUENCE [LARGE SCALE MRNA] (ISOFORMS 3 AND 5)</scope>
    <scope>NUCLEOTIDE SEQUENCE [LARGE SCALE MRNA] OF 639-999 (ISOFORM 3)</scope>
    <scope>VARIANT LYS-612</scope>
    <source>
        <tissue>Brain</tissue>
    </source>
</reference>
<reference key="3">
    <citation type="journal article" date="2004" name="Nature">
        <title>The DNA sequence and comparative analysis of human chromosome 5.</title>
        <authorList>
            <person name="Schmutz J."/>
            <person name="Martin J."/>
            <person name="Terry A."/>
            <person name="Couronne O."/>
            <person name="Grimwood J."/>
            <person name="Lowry S."/>
            <person name="Gordon L.A."/>
            <person name="Scott D."/>
            <person name="Xie G."/>
            <person name="Huang W."/>
            <person name="Hellsten U."/>
            <person name="Tran-Gyamfi M."/>
            <person name="She X."/>
            <person name="Prabhakar S."/>
            <person name="Aerts A."/>
            <person name="Altherr M."/>
            <person name="Bajorek E."/>
            <person name="Black S."/>
            <person name="Branscomb E."/>
            <person name="Caoile C."/>
            <person name="Challacombe J.F."/>
            <person name="Chan Y.M."/>
            <person name="Denys M."/>
            <person name="Detter J.C."/>
            <person name="Escobar J."/>
            <person name="Flowers D."/>
            <person name="Fotopulos D."/>
            <person name="Glavina T."/>
            <person name="Gomez M."/>
            <person name="Gonzales E."/>
            <person name="Goodstein D."/>
            <person name="Grigoriev I."/>
            <person name="Groza M."/>
            <person name="Hammon N."/>
            <person name="Hawkins T."/>
            <person name="Haydu L."/>
            <person name="Israni S."/>
            <person name="Jett J."/>
            <person name="Kadner K."/>
            <person name="Kimball H."/>
            <person name="Kobayashi A."/>
            <person name="Lopez F."/>
            <person name="Lou Y."/>
            <person name="Martinez D."/>
            <person name="Medina C."/>
            <person name="Morgan J."/>
            <person name="Nandkeshwar R."/>
            <person name="Noonan J.P."/>
            <person name="Pitluck S."/>
            <person name="Pollard M."/>
            <person name="Predki P."/>
            <person name="Priest J."/>
            <person name="Ramirez L."/>
            <person name="Retterer J."/>
            <person name="Rodriguez A."/>
            <person name="Rogers S."/>
            <person name="Salamov A."/>
            <person name="Salazar A."/>
            <person name="Thayer N."/>
            <person name="Tice H."/>
            <person name="Tsai M."/>
            <person name="Ustaszewska A."/>
            <person name="Vo N."/>
            <person name="Wheeler J."/>
            <person name="Wu K."/>
            <person name="Yang J."/>
            <person name="Dickson M."/>
            <person name="Cheng J.-F."/>
            <person name="Eichler E.E."/>
            <person name="Olsen A."/>
            <person name="Pennacchio L.A."/>
            <person name="Rokhsar D.S."/>
            <person name="Richardson P."/>
            <person name="Lucas S.M."/>
            <person name="Myers R.M."/>
            <person name="Rubin E.M."/>
        </authorList>
    </citation>
    <scope>NUCLEOTIDE SEQUENCE [LARGE SCALE GENOMIC DNA]</scope>
</reference>
<reference key="4">
    <citation type="journal article" date="2004" name="Genome Res.">
        <title>The status, quality, and expansion of the NIH full-length cDNA project: the Mammalian Gene Collection (MGC).</title>
        <authorList>
            <consortium name="The MGC Project Team"/>
        </authorList>
    </citation>
    <scope>NUCLEOTIDE SEQUENCE [LARGE SCALE MRNA] (ISOFORM 4)</scope>
    <scope>VARIANT LYS-612</scope>
    <source>
        <tissue>Ovary</tissue>
    </source>
</reference>
<comment type="function">
    <text evidence="1">Calcium sensor which is essential for the stabilization of normal baseline neurotransmitter release and for the induction and long-term maintenance of presynaptic homeostatic plasticity.</text>
</comment>
<comment type="cofactor">
    <cofactor evidence="4 8">
        <name>Ca(2+)</name>
        <dbReference type="ChEBI" id="CHEBI:29108"/>
    </cofactor>
    <text evidence="8">Binds Ca(2+) via the C2 domains in absence of phospholipids.</text>
</comment>
<comment type="subcellular location">
    <subcellularLocation>
        <location evidence="2">Cytoplasmic vesicle</location>
        <location evidence="2">Secretory vesicle</location>
        <location evidence="2">Synaptic vesicle membrane</location>
        <topology evidence="3">Multi-pass membrane protein</topology>
    </subcellularLocation>
    <subcellularLocation>
        <location evidence="2">Recycling endosome</location>
    </subcellularLocation>
    <subcellularLocation>
        <location evidence="1">Endoplasmic reticulum membrane</location>
    </subcellularLocation>
</comment>
<comment type="alternative products">
    <event type="alternative splicing"/>
    <isoform>
        <id>Q6DN14-1</id>
        <name>1</name>
        <name>MCTP1L</name>
        <sequence type="displayed"/>
    </isoform>
    <isoform>
        <id>Q6DN14-2</id>
        <name>2</name>
        <name>MCTP1S</name>
        <sequence type="described" ref="VSP_026656 VSP_026657"/>
    </isoform>
    <isoform>
        <id>Q6DN14-3</id>
        <name>3</name>
        <sequence type="described" ref="VSP_026656 VSP_026657 VSP_026658 VSP_026659"/>
    </isoform>
    <isoform>
        <id>Q6DN14-4</id>
        <name>4</name>
        <sequence type="described" ref="VSP_026656 VSP_026657 VSP_026660 VSP_026661"/>
    </isoform>
    <isoform>
        <id>Q6DN14-5</id>
        <name>5</name>
        <sequence type="described" ref="VSP_026655"/>
    </isoform>
</comment>
<comment type="similarity">
    <text evidence="12">Belongs to the MCTP family.</text>
</comment>
<accession>Q6DN14</accession>
<accession>Q6DN13</accession>
<accession>Q8N2W1</accession>
<accession>Q8NBA2</accession>
<accession>Q96LX0</accession>
<accession>Q9H6E8</accession>
<evidence type="ECO:0000250" key="1">
    <source>
        <dbReference type="UniProtKB" id="A1ZBD6"/>
    </source>
</evidence>
<evidence type="ECO:0000250" key="2">
    <source>
        <dbReference type="UniProtKB" id="D4ABL6"/>
    </source>
</evidence>
<evidence type="ECO:0000255" key="3"/>
<evidence type="ECO:0000255" key="4">
    <source>
        <dbReference type="PROSITE-ProRule" id="PRU00041"/>
    </source>
</evidence>
<evidence type="ECO:0000256" key="5">
    <source>
        <dbReference type="SAM" id="MobiDB-lite"/>
    </source>
</evidence>
<evidence type="ECO:0000269" key="6">
    <source>
    </source>
</evidence>
<evidence type="ECO:0000269" key="7">
    <source>
    </source>
</evidence>
<evidence type="ECO:0000269" key="8">
    <source>
    </source>
</evidence>
<evidence type="ECO:0000303" key="9">
    <source>
    </source>
</evidence>
<evidence type="ECO:0000303" key="10">
    <source>
    </source>
</evidence>
<evidence type="ECO:0000303" key="11">
    <source>
    </source>
</evidence>
<evidence type="ECO:0000305" key="12"/>
<protein>
    <recommendedName>
        <fullName>Multiple C2 and transmembrane domain-containing protein 1</fullName>
    </recommendedName>
</protein>
<name>MCTP1_HUMAN</name>
<feature type="chain" id="PRO_0000294471" description="Multiple C2 and transmembrane domain-containing protein 1">
    <location>
        <begin position="1"/>
        <end position="999"/>
    </location>
</feature>
<feature type="transmembrane region" description="Helical" evidence="3">
    <location>
        <begin position="811"/>
        <end position="831"/>
    </location>
</feature>
<feature type="transmembrane region" description="Helical" evidence="3">
    <location>
        <begin position="914"/>
        <end position="934"/>
    </location>
</feature>
<feature type="domain" description="C2 1" evidence="4">
    <location>
        <begin position="242"/>
        <end position="360"/>
    </location>
</feature>
<feature type="domain" description="C2 2" evidence="4">
    <location>
        <begin position="452"/>
        <end position="569"/>
    </location>
</feature>
<feature type="domain" description="C2 3" evidence="4">
    <location>
        <begin position="603"/>
        <end position="724"/>
    </location>
</feature>
<feature type="region of interest" description="Disordered" evidence="5">
    <location>
        <begin position="1"/>
        <end position="241"/>
    </location>
</feature>
<feature type="compositionally biased region" description="Low complexity" evidence="5">
    <location>
        <begin position="1"/>
        <end position="19"/>
    </location>
</feature>
<feature type="compositionally biased region" description="Gly residues" evidence="5">
    <location>
        <begin position="34"/>
        <end position="44"/>
    </location>
</feature>
<feature type="compositionally biased region" description="Low complexity" evidence="5">
    <location>
        <begin position="65"/>
        <end position="79"/>
    </location>
</feature>
<feature type="compositionally biased region" description="Polar residues" evidence="5">
    <location>
        <begin position="92"/>
        <end position="101"/>
    </location>
</feature>
<feature type="compositionally biased region" description="Low complexity" evidence="5">
    <location>
        <begin position="131"/>
        <end position="141"/>
    </location>
</feature>
<feature type="compositionally biased region" description="Low complexity" evidence="5">
    <location>
        <begin position="149"/>
        <end position="169"/>
    </location>
</feature>
<feature type="compositionally biased region" description="Basic and acidic residues" evidence="5">
    <location>
        <begin position="175"/>
        <end position="185"/>
    </location>
</feature>
<feature type="compositionally biased region" description="Basic and acidic residues" evidence="5">
    <location>
        <begin position="228"/>
        <end position="238"/>
    </location>
</feature>
<feature type="binding site" evidence="4">
    <location>
        <position position="277"/>
    </location>
    <ligand>
        <name>Ca(2+)</name>
        <dbReference type="ChEBI" id="CHEBI:29108"/>
        <label>1</label>
    </ligand>
</feature>
<feature type="binding site" evidence="4">
    <location>
        <position position="277"/>
    </location>
    <ligand>
        <name>Ca(2+)</name>
        <dbReference type="ChEBI" id="CHEBI:29108"/>
        <label>2</label>
    </ligand>
</feature>
<feature type="binding site" evidence="4">
    <location>
        <position position="283"/>
    </location>
    <ligand>
        <name>Ca(2+)</name>
        <dbReference type="ChEBI" id="CHEBI:29108"/>
        <label>1</label>
    </ligand>
</feature>
<feature type="binding site" evidence="4">
    <location>
        <position position="330"/>
    </location>
    <ligand>
        <name>Ca(2+)</name>
        <dbReference type="ChEBI" id="CHEBI:29108"/>
        <label>1</label>
    </ligand>
</feature>
<feature type="binding site" evidence="4">
    <location>
        <position position="330"/>
    </location>
    <ligand>
        <name>Ca(2+)</name>
        <dbReference type="ChEBI" id="CHEBI:29108"/>
        <label>2</label>
    </ligand>
</feature>
<feature type="binding site" evidence="4">
    <location>
        <position position="332"/>
    </location>
    <ligand>
        <name>Ca(2+)</name>
        <dbReference type="ChEBI" id="CHEBI:29108"/>
        <label>1</label>
    </ligand>
</feature>
<feature type="binding site" evidence="4">
    <location>
        <position position="332"/>
    </location>
    <ligand>
        <name>Ca(2+)</name>
        <dbReference type="ChEBI" id="CHEBI:29108"/>
        <label>2</label>
    </ligand>
</feature>
<feature type="binding site" evidence="4">
    <location>
        <position position="338"/>
    </location>
    <ligand>
        <name>Ca(2+)</name>
        <dbReference type="ChEBI" id="CHEBI:29108"/>
        <label>2</label>
    </ligand>
</feature>
<feature type="binding site" evidence="4">
    <location>
        <position position="486"/>
    </location>
    <ligand>
        <name>Ca(2+)</name>
        <dbReference type="ChEBI" id="CHEBI:29108"/>
        <label>3</label>
    </ligand>
</feature>
<feature type="binding site" evidence="4">
    <location>
        <position position="486"/>
    </location>
    <ligand>
        <name>Ca(2+)</name>
        <dbReference type="ChEBI" id="CHEBI:29108"/>
        <label>4</label>
    </ligand>
</feature>
<feature type="binding site" evidence="4">
    <location>
        <position position="492"/>
    </location>
    <ligand>
        <name>Ca(2+)</name>
        <dbReference type="ChEBI" id="CHEBI:29108"/>
        <label>3</label>
    </ligand>
</feature>
<feature type="binding site" evidence="4">
    <location>
        <position position="539"/>
    </location>
    <ligand>
        <name>Ca(2+)</name>
        <dbReference type="ChEBI" id="CHEBI:29108"/>
        <label>3</label>
    </ligand>
</feature>
<feature type="binding site" evidence="4">
    <location>
        <position position="539"/>
    </location>
    <ligand>
        <name>Ca(2+)</name>
        <dbReference type="ChEBI" id="CHEBI:29108"/>
        <label>4</label>
    </ligand>
</feature>
<feature type="binding site" evidence="4">
    <location>
        <position position="541"/>
    </location>
    <ligand>
        <name>Ca(2+)</name>
        <dbReference type="ChEBI" id="CHEBI:29108"/>
        <label>3</label>
    </ligand>
</feature>
<feature type="binding site" evidence="4">
    <location>
        <position position="541"/>
    </location>
    <ligand>
        <name>Ca(2+)</name>
        <dbReference type="ChEBI" id="CHEBI:29108"/>
        <label>4</label>
    </ligand>
</feature>
<feature type="binding site" evidence="4">
    <location>
        <position position="547"/>
    </location>
    <ligand>
        <name>Ca(2+)</name>
        <dbReference type="ChEBI" id="CHEBI:29108"/>
        <label>4</label>
    </ligand>
</feature>
<feature type="binding site" evidence="4">
    <location>
        <position position="642"/>
    </location>
    <ligand>
        <name>Ca(2+)</name>
        <dbReference type="ChEBI" id="CHEBI:29108"/>
        <label>5</label>
    </ligand>
</feature>
<feature type="binding site" evidence="4">
    <location>
        <position position="642"/>
    </location>
    <ligand>
        <name>Ca(2+)</name>
        <dbReference type="ChEBI" id="CHEBI:29108"/>
        <label>6</label>
    </ligand>
</feature>
<feature type="binding site" evidence="4">
    <location>
        <position position="648"/>
    </location>
    <ligand>
        <name>Ca(2+)</name>
        <dbReference type="ChEBI" id="CHEBI:29108"/>
        <label>5</label>
    </ligand>
</feature>
<feature type="binding site" evidence="4">
    <location>
        <position position="694"/>
    </location>
    <ligand>
        <name>Ca(2+)</name>
        <dbReference type="ChEBI" id="CHEBI:29108"/>
        <label>5</label>
    </ligand>
</feature>
<feature type="binding site" evidence="4">
    <location>
        <position position="694"/>
    </location>
    <ligand>
        <name>Ca(2+)</name>
        <dbReference type="ChEBI" id="CHEBI:29108"/>
        <label>6</label>
    </ligand>
</feature>
<feature type="binding site" evidence="4">
    <location>
        <position position="696"/>
    </location>
    <ligand>
        <name>Ca(2+)</name>
        <dbReference type="ChEBI" id="CHEBI:29108"/>
        <label>5</label>
    </ligand>
</feature>
<feature type="binding site" evidence="4">
    <location>
        <position position="696"/>
    </location>
    <ligand>
        <name>Ca(2+)</name>
        <dbReference type="ChEBI" id="CHEBI:29108"/>
        <label>6</label>
    </ligand>
</feature>
<feature type="binding site" evidence="4">
    <location>
        <position position="702"/>
    </location>
    <ligand>
        <name>Ca(2+)</name>
        <dbReference type="ChEBI" id="CHEBI:29108"/>
        <label>6</label>
    </ligand>
</feature>
<feature type="splice variant" id="VSP_026655" description="In isoform 5." evidence="9">
    <location>
        <begin position="1"/>
        <end position="484"/>
    </location>
</feature>
<feature type="splice variant" id="VSP_026656" description="In isoform 2, isoform 3 and isoform 4." evidence="9 10 11">
    <location>
        <begin position="1"/>
        <end position="221"/>
    </location>
</feature>
<feature type="splice variant" id="VSP_026657" description="In isoform 2, isoform 3 and isoform 4." evidence="9 10 11">
    <original>RSPAESRAPETGEEHGSSQ</original>
    <variation>MLDSCKLKSACNLPFICNK</variation>
    <location>
        <begin position="222"/>
        <end position="240"/>
    </location>
</feature>
<feature type="splice variant" id="VSP_026658" description="In isoform 3." evidence="9">
    <location>
        <begin position="405"/>
        <end position="450"/>
    </location>
</feature>
<feature type="splice variant" id="VSP_026659" description="In isoform 3." evidence="9">
    <location>
        <begin position="813"/>
        <end position="852"/>
    </location>
</feature>
<feature type="splice variant" id="VSP_026660" description="In isoform 4." evidence="10">
    <original>LFLFVVWNF</original>
    <variation>ALYGTFINV</variation>
    <location>
        <begin position="813"/>
        <end position="821"/>
    </location>
</feature>
<feature type="splice variant" id="VSP_026661" description="In isoform 4." evidence="10">
    <location>
        <begin position="822"/>
        <end position="999"/>
    </location>
</feature>
<feature type="sequence variant" id="VAR_033189" description="In dbSNP:rs9885412." evidence="6 7">
    <original>R</original>
    <variation>K</variation>
    <location>
        <position position="612"/>
    </location>
</feature>
<feature type="sequence conflict" description="In Ref. 1; AAT73058." evidence="12" ref="1">
    <original>H</original>
    <variation>R</variation>
    <location>
        <position position="195"/>
    </location>
</feature>
<feature type="sequence conflict" description="In Ref. 1; AAT73058." evidence="12" ref="1">
    <original>P</original>
    <variation>A</variation>
    <location>
        <position position="215"/>
    </location>
</feature>
<feature type="sequence conflict" description="In Ref. 2; BAB15311." evidence="12" ref="2">
    <original>K</original>
    <variation>R</variation>
    <location>
        <position position="727"/>
    </location>
</feature>
<feature type="sequence conflict" description="In Ref. 2; BAB15311." evidence="12" ref="2">
    <original>N</original>
    <variation>S</variation>
    <location>
        <position position="907"/>
    </location>
</feature>
<organism>
    <name type="scientific">Homo sapiens</name>
    <name type="common">Human</name>
    <dbReference type="NCBI Taxonomy" id="9606"/>
    <lineage>
        <taxon>Eukaryota</taxon>
        <taxon>Metazoa</taxon>
        <taxon>Chordata</taxon>
        <taxon>Craniata</taxon>
        <taxon>Vertebrata</taxon>
        <taxon>Euteleostomi</taxon>
        <taxon>Mammalia</taxon>
        <taxon>Eutheria</taxon>
        <taxon>Euarchontoglires</taxon>
        <taxon>Primates</taxon>
        <taxon>Haplorrhini</taxon>
        <taxon>Catarrhini</taxon>
        <taxon>Hominidae</taxon>
        <taxon>Homo</taxon>
    </lineage>
</organism>